<organism>
    <name type="scientific">Arabidopsis thaliana</name>
    <name type="common">Mouse-ear cress</name>
    <dbReference type="NCBI Taxonomy" id="3702"/>
    <lineage>
        <taxon>Eukaryota</taxon>
        <taxon>Viridiplantae</taxon>
        <taxon>Streptophyta</taxon>
        <taxon>Embryophyta</taxon>
        <taxon>Tracheophyta</taxon>
        <taxon>Spermatophyta</taxon>
        <taxon>Magnoliopsida</taxon>
        <taxon>eudicotyledons</taxon>
        <taxon>Gunneridae</taxon>
        <taxon>Pentapetalae</taxon>
        <taxon>rosids</taxon>
        <taxon>malvids</taxon>
        <taxon>Brassicales</taxon>
        <taxon>Brassicaceae</taxon>
        <taxon>Camelineae</taxon>
        <taxon>Arabidopsis</taxon>
    </lineage>
</organism>
<gene>
    <name type="primary">RPS10C</name>
    <name type="ordered locus">At5g52650</name>
    <name type="ORF">F6N7.14</name>
</gene>
<protein>
    <recommendedName>
        <fullName evidence="3">Small ribosomal subunit protein eS10x</fullName>
    </recommendedName>
    <alternativeName>
        <fullName>40S ribosomal protein S10-3</fullName>
    </alternativeName>
</protein>
<reference key="1">
    <citation type="submission" date="1999-04" db="EMBL/GenBank/DDBJ databases">
        <title>Structural analysis of Arabidopsis thaliana chromosome 5. XI.</title>
        <authorList>
            <person name="Kaneko T."/>
            <person name="Katoh T."/>
            <person name="Asamizu E."/>
            <person name="Sato S."/>
            <person name="Nakamura Y."/>
            <person name="Kotani H."/>
            <person name="Tabata S."/>
        </authorList>
    </citation>
    <scope>NUCLEOTIDE SEQUENCE [LARGE SCALE GENOMIC DNA]</scope>
    <source>
        <strain>cv. Columbia</strain>
    </source>
</reference>
<reference key="2">
    <citation type="journal article" date="2017" name="Plant J.">
        <title>Araport11: a complete reannotation of the Arabidopsis thaliana reference genome.</title>
        <authorList>
            <person name="Cheng C.Y."/>
            <person name="Krishnakumar V."/>
            <person name="Chan A.P."/>
            <person name="Thibaud-Nissen F."/>
            <person name="Schobel S."/>
            <person name="Town C.D."/>
        </authorList>
    </citation>
    <scope>GENOME REANNOTATION</scope>
    <source>
        <strain>cv. Columbia</strain>
    </source>
</reference>
<reference key="3">
    <citation type="journal article" date="2003" name="Science">
        <title>Empirical analysis of transcriptional activity in the Arabidopsis genome.</title>
        <authorList>
            <person name="Yamada K."/>
            <person name="Lim J."/>
            <person name="Dale J.M."/>
            <person name="Chen H."/>
            <person name="Shinn P."/>
            <person name="Palm C.J."/>
            <person name="Southwick A.M."/>
            <person name="Wu H.C."/>
            <person name="Kim C.J."/>
            <person name="Nguyen M."/>
            <person name="Pham P.K."/>
            <person name="Cheuk R.F."/>
            <person name="Karlin-Newmann G."/>
            <person name="Liu S.X."/>
            <person name="Lam B."/>
            <person name="Sakano H."/>
            <person name="Wu T."/>
            <person name="Yu G."/>
            <person name="Miranda M."/>
            <person name="Quach H.L."/>
            <person name="Tripp M."/>
            <person name="Chang C.H."/>
            <person name="Lee J.M."/>
            <person name="Toriumi M.J."/>
            <person name="Chan M.M."/>
            <person name="Tang C.C."/>
            <person name="Onodera C.S."/>
            <person name="Deng J.M."/>
            <person name="Akiyama K."/>
            <person name="Ansari Y."/>
            <person name="Arakawa T."/>
            <person name="Banh J."/>
            <person name="Banno F."/>
            <person name="Bowser L."/>
            <person name="Brooks S.Y."/>
            <person name="Carninci P."/>
            <person name="Chao Q."/>
            <person name="Choy N."/>
            <person name="Enju A."/>
            <person name="Goldsmith A.D."/>
            <person name="Gurjal M."/>
            <person name="Hansen N.F."/>
            <person name="Hayashizaki Y."/>
            <person name="Johnson-Hopson C."/>
            <person name="Hsuan V.W."/>
            <person name="Iida K."/>
            <person name="Karnes M."/>
            <person name="Khan S."/>
            <person name="Koesema E."/>
            <person name="Ishida J."/>
            <person name="Jiang P.X."/>
            <person name="Jones T."/>
            <person name="Kawai J."/>
            <person name="Kamiya A."/>
            <person name="Meyers C."/>
            <person name="Nakajima M."/>
            <person name="Narusaka M."/>
            <person name="Seki M."/>
            <person name="Sakurai T."/>
            <person name="Satou M."/>
            <person name="Tamse R."/>
            <person name="Vaysberg M."/>
            <person name="Wallender E.K."/>
            <person name="Wong C."/>
            <person name="Yamamura Y."/>
            <person name="Yuan S."/>
            <person name="Shinozaki K."/>
            <person name="Davis R.W."/>
            <person name="Theologis A."/>
            <person name="Ecker J.R."/>
        </authorList>
    </citation>
    <scope>NUCLEOTIDE SEQUENCE [LARGE SCALE MRNA]</scope>
    <source>
        <strain>cv. Columbia</strain>
    </source>
</reference>
<reference key="4">
    <citation type="journal article" date="2001" name="Plant Physiol.">
        <title>The organization of cytoplasmic ribosomal protein genes in the Arabidopsis genome.</title>
        <authorList>
            <person name="Barakat A."/>
            <person name="Szick-Miranda K."/>
            <person name="Chang I.-F."/>
            <person name="Guyot R."/>
            <person name="Blanc G."/>
            <person name="Cooke R."/>
            <person name="Delseny M."/>
            <person name="Bailey-Serres J."/>
        </authorList>
    </citation>
    <scope>GENE FAMILY ORGANIZATION</scope>
    <scope>NOMENCLATURE</scope>
</reference>
<reference key="5">
    <citation type="journal article" date="2023" name="Plant Cell">
        <title>An updated nomenclature for plant ribosomal protein genes.</title>
        <authorList>
            <person name="Scarpin M.R."/>
            <person name="Busche M."/>
            <person name="Martinez R.E."/>
            <person name="Harper L.C."/>
            <person name="Reiser L."/>
            <person name="Szakonyi D."/>
            <person name="Merchante C."/>
            <person name="Lan T."/>
            <person name="Xiong W."/>
            <person name="Mo B."/>
            <person name="Tang G."/>
            <person name="Chen X."/>
            <person name="Bailey-Serres J."/>
            <person name="Browning K.S."/>
            <person name="Brunkard J.O."/>
        </authorList>
    </citation>
    <scope>NOMENCLATURE</scope>
</reference>
<accession>Q9LTF2</accession>
<accession>Q8VZ66</accession>
<name>RS103_ARATH</name>
<evidence type="ECO:0000250" key="1"/>
<evidence type="ECO:0000256" key="2">
    <source>
        <dbReference type="SAM" id="MobiDB-lite"/>
    </source>
</evidence>
<evidence type="ECO:0000303" key="3">
    <source>
    </source>
</evidence>
<evidence type="ECO:0000305" key="4"/>
<feature type="chain" id="PRO_0000116372" description="Small ribosomal subunit protein eS10x">
    <location>
        <begin position="1"/>
        <end position="179"/>
    </location>
</feature>
<feature type="region of interest" description="Disordered" evidence="2">
    <location>
        <begin position="90"/>
        <end position="179"/>
    </location>
</feature>
<feature type="compositionally biased region" description="Basic and acidic residues" evidence="2">
    <location>
        <begin position="108"/>
        <end position="129"/>
    </location>
</feature>
<feature type="compositionally biased region" description="Gly residues" evidence="2">
    <location>
        <begin position="134"/>
        <end position="144"/>
    </location>
</feature>
<feature type="compositionally biased region" description="Low complexity" evidence="2">
    <location>
        <begin position="145"/>
        <end position="156"/>
    </location>
</feature>
<feature type="compositionally biased region" description="Gly residues" evidence="2">
    <location>
        <begin position="157"/>
        <end position="167"/>
    </location>
</feature>
<feature type="compositionally biased region" description="Low complexity" evidence="2">
    <location>
        <begin position="168"/>
        <end position="179"/>
    </location>
</feature>
<proteinExistence type="evidence at protein level"/>
<keyword id="KW-0963">Cytoplasm</keyword>
<keyword id="KW-1185">Reference proteome</keyword>
<keyword id="KW-0687">Ribonucleoprotein</keyword>
<keyword id="KW-0689">Ribosomal protein</keyword>
<sequence>MIISEANRKEICKYLFKEGVCFAKKDFNLAKHPLIDVPNLQVIKLMQSFKSKEYVRETFAWMHYYWFLTNEGIEFLRTYLNLPSDVVPATLKKSAKPGGRPFGGPPGDRSRGPRHEGGDRPRFGDRDGYRAGPRAGGEFGGEKGGAPADYQPSFQGSGRGFGRGAGGYSAAAPSGSGLP</sequence>
<dbReference type="EMBL" id="AB025606">
    <property type="protein sequence ID" value="BAA98083.1"/>
    <property type="status" value="ALT_SEQ"/>
    <property type="molecule type" value="Genomic_DNA"/>
</dbReference>
<dbReference type="EMBL" id="CP002688">
    <property type="protein sequence ID" value="AED96245.1"/>
    <property type="molecule type" value="Genomic_DNA"/>
</dbReference>
<dbReference type="EMBL" id="AY065217">
    <property type="protein sequence ID" value="AAL38693.1"/>
    <property type="molecule type" value="mRNA"/>
</dbReference>
<dbReference type="EMBL" id="AY088678">
    <property type="protein sequence ID" value="AAM67000.1"/>
    <property type="molecule type" value="mRNA"/>
</dbReference>
<dbReference type="EMBL" id="AY122932">
    <property type="protein sequence ID" value="AAM67465.1"/>
    <property type="molecule type" value="mRNA"/>
</dbReference>
<dbReference type="RefSeq" id="NP_200077.1">
    <property type="nucleotide sequence ID" value="NM_124643.4"/>
</dbReference>
<dbReference type="SMR" id="Q9LTF2"/>
<dbReference type="BioGRID" id="20587">
    <property type="interactions" value="41"/>
</dbReference>
<dbReference type="FunCoup" id="Q9LTF2">
    <property type="interactions" value="3208"/>
</dbReference>
<dbReference type="IntAct" id="Q9LTF2">
    <property type="interactions" value="8"/>
</dbReference>
<dbReference type="STRING" id="3702.Q9LTF2"/>
<dbReference type="iPTMnet" id="Q9LTF2"/>
<dbReference type="MetOSite" id="Q9LTF2"/>
<dbReference type="PaxDb" id="3702-AT5G52650.1"/>
<dbReference type="ProteomicsDB" id="226750"/>
<dbReference type="EnsemblPlants" id="AT5G52650.1">
    <property type="protein sequence ID" value="AT5G52650.1"/>
    <property type="gene ID" value="AT5G52650"/>
</dbReference>
<dbReference type="GeneID" id="835342"/>
<dbReference type="Gramene" id="AT5G52650.1">
    <property type="protein sequence ID" value="AT5G52650.1"/>
    <property type="gene ID" value="AT5G52650"/>
</dbReference>
<dbReference type="KEGG" id="ath:AT5G52650"/>
<dbReference type="Araport" id="AT5G52650"/>
<dbReference type="TAIR" id="AT5G52650"/>
<dbReference type="eggNOG" id="KOG3344">
    <property type="taxonomic scope" value="Eukaryota"/>
</dbReference>
<dbReference type="HOGENOM" id="CLU_089349_0_2_1"/>
<dbReference type="InParanoid" id="Q9LTF2"/>
<dbReference type="OMA" id="ERRFTRN"/>
<dbReference type="OrthoDB" id="5211809at2759"/>
<dbReference type="PhylomeDB" id="Q9LTF2"/>
<dbReference type="PRO" id="PR:Q9LTF2"/>
<dbReference type="Proteomes" id="UP000006548">
    <property type="component" value="Chromosome 5"/>
</dbReference>
<dbReference type="ExpressionAtlas" id="Q9LTF2">
    <property type="expression patterns" value="baseline and differential"/>
</dbReference>
<dbReference type="GO" id="GO:0022626">
    <property type="term" value="C:cytosolic ribosome"/>
    <property type="evidence" value="ECO:0007005"/>
    <property type="project" value="TAIR"/>
</dbReference>
<dbReference type="GO" id="GO:0022627">
    <property type="term" value="C:cytosolic small ribosomal subunit"/>
    <property type="evidence" value="ECO:0007005"/>
    <property type="project" value="TAIR"/>
</dbReference>
<dbReference type="GO" id="GO:0009505">
    <property type="term" value="C:plant-type cell wall"/>
    <property type="evidence" value="ECO:0007005"/>
    <property type="project" value="TAIR"/>
</dbReference>
<dbReference type="GO" id="GO:0009536">
    <property type="term" value="C:plastid"/>
    <property type="evidence" value="ECO:0007005"/>
    <property type="project" value="TAIR"/>
</dbReference>
<dbReference type="GO" id="GO:0003729">
    <property type="term" value="F:mRNA binding"/>
    <property type="evidence" value="ECO:0000314"/>
    <property type="project" value="TAIR"/>
</dbReference>
<dbReference type="GO" id="GO:0003735">
    <property type="term" value="F:structural constituent of ribosome"/>
    <property type="evidence" value="ECO:0000314"/>
    <property type="project" value="CAFA"/>
</dbReference>
<dbReference type="FunFam" id="1.10.10.10:FF:000025">
    <property type="entry name" value="40S ribosomal protein S10"/>
    <property type="match status" value="1"/>
</dbReference>
<dbReference type="Gene3D" id="1.10.10.10">
    <property type="entry name" value="Winged helix-like DNA-binding domain superfamily/Winged helix DNA-binding domain"/>
    <property type="match status" value="1"/>
</dbReference>
<dbReference type="InterPro" id="IPR005326">
    <property type="entry name" value="Plectin_eS10_N"/>
</dbReference>
<dbReference type="InterPro" id="IPR037447">
    <property type="entry name" value="Ribosomal_eS10"/>
</dbReference>
<dbReference type="InterPro" id="IPR036388">
    <property type="entry name" value="WH-like_DNA-bd_sf"/>
</dbReference>
<dbReference type="PANTHER" id="PTHR12146">
    <property type="entry name" value="40S RIBOSOMAL PROTEIN S10"/>
    <property type="match status" value="1"/>
</dbReference>
<dbReference type="PANTHER" id="PTHR12146:SF27">
    <property type="entry name" value="SMALL RIBOSOMAL SUBUNIT PROTEIN ES10X"/>
    <property type="match status" value="1"/>
</dbReference>
<dbReference type="Pfam" id="PF03501">
    <property type="entry name" value="S10_plectin"/>
    <property type="match status" value="1"/>
</dbReference>
<comment type="interaction">
    <interactant intactId="EBI-4458966">
        <id>Q9LTF2</id>
    </interactant>
    <interactant intactId="EBI-15206626">
        <id>Q9S851</id>
        <label>NAC031</label>
    </interactant>
    <organismsDiffer>false</organismsDiffer>
    <experiments>3</experiments>
</comment>
<comment type="interaction">
    <interactant intactId="EBI-4458966">
        <id>Q9LTF2</id>
    </interactant>
    <interactant intactId="EBI-2112777">
        <id>Q9SK33</id>
        <label>WRKY60</label>
    </interactant>
    <organismsDiffer>false</organismsDiffer>
    <experiments>4</experiments>
</comment>
<comment type="subcellular location">
    <subcellularLocation>
        <location evidence="1">Cytoplasm</location>
    </subcellularLocation>
</comment>
<comment type="similarity">
    <text evidence="4">Belongs to the eukaryotic ribosomal protein eS10 family.</text>
</comment>
<comment type="sequence caution" evidence="4">
    <conflict type="erroneous gene model prediction">
        <sequence resource="EMBL-CDS" id="BAA98083"/>
    </conflict>
</comment>